<comment type="function">
    <text evidence="2">Plays a role in membrane trafficking and in homotypic early endosome fusion. Participates in arteriogenesis by regulating vascular endothelial growth factor receptor 2/VEGFR2 cell surface expression and endosomal trafficking. By interacting with SDCCAG8, localizes to centrosomes and plays a critical role in ciliogenesis.</text>
</comment>
<comment type="subunit">
    <text evidence="2">Heterodimer with RABGEF1. The dimer binds RAB5A that has been activated by GTP-binding. Interacts with SDCCAG8; this interaction is important for ciliogenesis regulation. Interacts with RAB4; this interaction may mediate VEGFR2 cell surface expression.</text>
</comment>
<comment type="subcellular location">
    <subcellularLocation>
        <location evidence="2">Cytoplasm</location>
    </subcellularLocation>
    <subcellularLocation>
        <location evidence="2">Early endosome</location>
    </subcellularLocation>
    <subcellularLocation>
        <location evidence="2">Cytoplasm</location>
        <location evidence="2">Cytoskeleton</location>
        <location evidence="2">Microtubule organizing center</location>
        <location evidence="2">Centrosome</location>
    </subcellularLocation>
    <subcellularLocation>
        <location evidence="2">Cytoplasm</location>
        <location evidence="2">Cytoskeleton</location>
        <location evidence="2">Cilium basal body</location>
    </subcellularLocation>
</comment>
<comment type="similarity">
    <text evidence="5">Belongs to the rabaptin family.</text>
</comment>
<keyword id="KW-0007">Acetylation</keyword>
<keyword id="KW-0966">Cell projection</keyword>
<keyword id="KW-0970">Cilium biogenesis/degradation</keyword>
<keyword id="KW-0175">Coiled coil</keyword>
<keyword id="KW-0963">Cytoplasm</keyword>
<keyword id="KW-0206">Cytoskeleton</keyword>
<keyword id="KW-0254">Endocytosis</keyword>
<keyword id="KW-0967">Endosome</keyword>
<keyword id="KW-0597">Phosphoprotein</keyword>
<keyword id="KW-0653">Protein transport</keyword>
<keyword id="KW-1185">Reference proteome</keyword>
<keyword id="KW-0813">Transport</keyword>
<protein>
    <recommendedName>
        <fullName>Rab GTPase-binding effector protein 2</fullName>
    </recommendedName>
</protein>
<accession>A4FUG8</accession>
<name>RABE2_BOVIN</name>
<dbReference type="EMBL" id="BC114873">
    <property type="protein sequence ID" value="AAI14874.1"/>
    <property type="molecule type" value="mRNA"/>
</dbReference>
<dbReference type="RefSeq" id="NP_001076877.2">
    <property type="nucleotide sequence ID" value="NM_001083408.2"/>
</dbReference>
<dbReference type="SMR" id="A4FUG8"/>
<dbReference type="BioGRID" id="168367">
    <property type="interactions" value="2"/>
</dbReference>
<dbReference type="FunCoup" id="A4FUG8">
    <property type="interactions" value="733"/>
</dbReference>
<dbReference type="STRING" id="9913.ENSBTAP00000008595"/>
<dbReference type="PaxDb" id="9913-ENSBTAP00000008595"/>
<dbReference type="Ensembl" id="ENSBTAT00000008595.5">
    <property type="protein sequence ID" value="ENSBTAP00000008595.4"/>
    <property type="gene ID" value="ENSBTAG00000006542.7"/>
</dbReference>
<dbReference type="GeneID" id="511736"/>
<dbReference type="KEGG" id="bta:511736"/>
<dbReference type="CTD" id="79874"/>
<dbReference type="VEuPathDB" id="HostDB:ENSBTAG00000006542"/>
<dbReference type="VGNC" id="VGNC:33668">
    <property type="gene designation" value="RABEP2"/>
</dbReference>
<dbReference type="eggNOG" id="KOG0993">
    <property type="taxonomic scope" value="Eukaryota"/>
</dbReference>
<dbReference type="GeneTree" id="ENSGT00530000063743"/>
<dbReference type="HOGENOM" id="CLU_035043_0_0_1"/>
<dbReference type="InParanoid" id="A4FUG8"/>
<dbReference type="OMA" id="EMMHSIV"/>
<dbReference type="OrthoDB" id="79940at2759"/>
<dbReference type="TreeFam" id="TF329365"/>
<dbReference type="Proteomes" id="UP000009136">
    <property type="component" value="Chromosome 25"/>
</dbReference>
<dbReference type="Bgee" id="ENSBTAG00000006542">
    <property type="expression patterns" value="Expressed in retina and 105 other cell types or tissues"/>
</dbReference>
<dbReference type="GO" id="GO:0005813">
    <property type="term" value="C:centrosome"/>
    <property type="evidence" value="ECO:0007669"/>
    <property type="project" value="UniProtKB-SubCell"/>
</dbReference>
<dbReference type="GO" id="GO:0036064">
    <property type="term" value="C:ciliary basal body"/>
    <property type="evidence" value="ECO:0007669"/>
    <property type="project" value="Ensembl"/>
</dbReference>
<dbReference type="GO" id="GO:0005829">
    <property type="term" value="C:cytosol"/>
    <property type="evidence" value="ECO:0007669"/>
    <property type="project" value="Ensembl"/>
</dbReference>
<dbReference type="GO" id="GO:0005769">
    <property type="term" value="C:early endosome"/>
    <property type="evidence" value="ECO:0007669"/>
    <property type="project" value="UniProtKB-SubCell"/>
</dbReference>
<dbReference type="GO" id="GO:0005794">
    <property type="term" value="C:Golgi apparatus"/>
    <property type="evidence" value="ECO:0007669"/>
    <property type="project" value="Ensembl"/>
</dbReference>
<dbReference type="GO" id="GO:0043231">
    <property type="term" value="C:intracellular membrane-bounded organelle"/>
    <property type="evidence" value="ECO:0000318"/>
    <property type="project" value="GO_Central"/>
</dbReference>
<dbReference type="GO" id="GO:0008083">
    <property type="term" value="F:growth factor activity"/>
    <property type="evidence" value="ECO:0007669"/>
    <property type="project" value="InterPro"/>
</dbReference>
<dbReference type="GO" id="GO:0005096">
    <property type="term" value="F:GTPase activator activity"/>
    <property type="evidence" value="ECO:0007669"/>
    <property type="project" value="InterPro"/>
</dbReference>
<dbReference type="GO" id="GO:0030030">
    <property type="term" value="P:cell projection organization"/>
    <property type="evidence" value="ECO:0007669"/>
    <property type="project" value="UniProtKB-KW"/>
</dbReference>
<dbReference type="GO" id="GO:0006897">
    <property type="term" value="P:endocytosis"/>
    <property type="evidence" value="ECO:0007669"/>
    <property type="project" value="UniProtKB-KW"/>
</dbReference>
<dbReference type="GO" id="GO:0015031">
    <property type="term" value="P:protein transport"/>
    <property type="evidence" value="ECO:0007669"/>
    <property type="project" value="UniProtKB-KW"/>
</dbReference>
<dbReference type="GO" id="GO:1902017">
    <property type="term" value="P:regulation of cilium assembly"/>
    <property type="evidence" value="ECO:0007669"/>
    <property type="project" value="Ensembl"/>
</dbReference>
<dbReference type="FunFam" id="1.20.5.340:FF:000028">
    <property type="entry name" value="rab GTPase-binding effector protein 2 isoform X1"/>
    <property type="match status" value="1"/>
</dbReference>
<dbReference type="FunFam" id="1.20.5.730:FF:000003">
    <property type="entry name" value="rab GTPase-binding effector protein 2 isoform X1"/>
    <property type="match status" value="1"/>
</dbReference>
<dbReference type="Gene3D" id="1.20.5.340">
    <property type="match status" value="1"/>
</dbReference>
<dbReference type="Gene3D" id="1.20.5.730">
    <property type="entry name" value="Single helix bin"/>
    <property type="match status" value="1"/>
</dbReference>
<dbReference type="InterPro" id="IPR003914">
    <property type="entry name" value="Rabaptin"/>
</dbReference>
<dbReference type="InterPro" id="IPR018514">
    <property type="entry name" value="Rabaptin_coiled-coil"/>
</dbReference>
<dbReference type="InterPro" id="IPR015390">
    <property type="entry name" value="Rabaptin_Rab5-bd_dom"/>
</dbReference>
<dbReference type="PANTHER" id="PTHR31179">
    <property type="entry name" value="RAB GTPASE-BINDING EFFECTOR PROTEIN"/>
    <property type="match status" value="1"/>
</dbReference>
<dbReference type="PANTHER" id="PTHR31179:SF6">
    <property type="entry name" value="RAB GTPASE-BINDING EFFECTOR PROTEIN 2"/>
    <property type="match status" value="1"/>
</dbReference>
<dbReference type="Pfam" id="PF09311">
    <property type="entry name" value="Rab5-bind"/>
    <property type="match status" value="1"/>
</dbReference>
<dbReference type="Pfam" id="PF03528">
    <property type="entry name" value="Rabaptin"/>
    <property type="match status" value="1"/>
</dbReference>
<dbReference type="PRINTS" id="PR01432">
    <property type="entry name" value="RABAPTIN"/>
</dbReference>
<dbReference type="SUPFAM" id="SSF103652">
    <property type="entry name" value="G protein-binding domain"/>
    <property type="match status" value="2"/>
</dbReference>
<sequence length="585" mass="65602">MAAAAPAAAGEDGRRRLPGAALDIQPQEGAKVEAESGELERLRAELAGALAEMETMKAVAEVSESTKAEAVAAVQRQCQEEVASLQAILKDSISSYEAQITSLKQERQQQQQDCEEKERELGRLKQLLSRAHPLDSLEKQMEKAHEDSEKLREIVLPMEQEIEELKAKLLRAEELIQEIQRRPRHPPSLHGSTELLLSRDPSPPLEPLEELSEDGGPAAEAFAHNCDDSASISSFSLGGGASGRASLPRSRQGLSPEQEETASLVSTGTLVPEGIYLPPPGYQLVPDNQWEQLQLEGRQLQKDLESISRERDELQEGLRRSNEDCAKQMQVLLAQVQNSEQLLRTLQGTVSQAQERVQLQMAELANSHKCLSHEVKRLTEENQGLRAEQPSSSVPRVLEQDEGWEESLPSSLPELQQLVRRTQQEARARQQAQEHEAERLRIEIVTLREALDEETAARASLEGQLRVQREETEVLEASLCSLRMEMERVQEEQSKAKRQEVLRPSQGTGRTEEAQLTDLLSEQRAKMLRLQAELETSEQVQRDFVRLSQALQVRLERIRQAGSLEQVRGIIDEAPLRDVRDIKDT</sequence>
<evidence type="ECO:0000250" key="1">
    <source>
        <dbReference type="UniProtKB" id="Q62835"/>
    </source>
</evidence>
<evidence type="ECO:0000250" key="2">
    <source>
        <dbReference type="UniProtKB" id="Q9H5N1"/>
    </source>
</evidence>
<evidence type="ECO:0000255" key="3"/>
<evidence type="ECO:0000256" key="4">
    <source>
        <dbReference type="SAM" id="MobiDB-lite"/>
    </source>
</evidence>
<evidence type="ECO:0000305" key="5"/>
<reference key="1">
    <citation type="submission" date="2006-04" db="EMBL/GenBank/DDBJ databases">
        <authorList>
            <consortium name="NIH - Mammalian Gene Collection (MGC) project"/>
        </authorList>
    </citation>
    <scope>NUCLEOTIDE SEQUENCE [LARGE SCALE MRNA]</scope>
    <source>
        <strain>Hereford</strain>
        <tissue>Thymus</tissue>
    </source>
</reference>
<organism>
    <name type="scientific">Bos taurus</name>
    <name type="common">Bovine</name>
    <dbReference type="NCBI Taxonomy" id="9913"/>
    <lineage>
        <taxon>Eukaryota</taxon>
        <taxon>Metazoa</taxon>
        <taxon>Chordata</taxon>
        <taxon>Craniata</taxon>
        <taxon>Vertebrata</taxon>
        <taxon>Euteleostomi</taxon>
        <taxon>Mammalia</taxon>
        <taxon>Eutheria</taxon>
        <taxon>Laurasiatheria</taxon>
        <taxon>Artiodactyla</taxon>
        <taxon>Ruminantia</taxon>
        <taxon>Pecora</taxon>
        <taxon>Bovidae</taxon>
        <taxon>Bovinae</taxon>
        <taxon>Bos</taxon>
    </lineage>
</organism>
<gene>
    <name type="primary">RABEP2</name>
</gene>
<feature type="initiator methionine" description="Removed" evidence="2">
    <location>
        <position position="1"/>
    </location>
</feature>
<feature type="chain" id="PRO_0000346792" description="Rab GTPase-binding effector protein 2">
    <location>
        <begin position="2"/>
        <end position="585"/>
    </location>
</feature>
<feature type="region of interest" description="Disordered" evidence="4">
    <location>
        <begin position="178"/>
        <end position="265"/>
    </location>
</feature>
<feature type="region of interest" description="Disordered" evidence="4">
    <location>
        <begin position="381"/>
        <end position="408"/>
    </location>
</feature>
<feature type="region of interest" description="Disordered" evidence="4">
    <location>
        <begin position="491"/>
        <end position="515"/>
    </location>
</feature>
<feature type="coiled-coil region" evidence="3">
    <location>
        <begin position="27"/>
        <end position="183"/>
    </location>
</feature>
<feature type="coiled-coil region" evidence="3">
    <location>
        <begin position="288"/>
        <end position="540"/>
    </location>
</feature>
<feature type="compositionally biased region" description="Basic and acidic residues" evidence="4">
    <location>
        <begin position="491"/>
        <end position="501"/>
    </location>
</feature>
<feature type="modified residue" description="N-acetylalanine" evidence="2">
    <location>
        <position position="2"/>
    </location>
</feature>
<feature type="modified residue" description="Phosphoserine" evidence="1">
    <location>
        <position position="188"/>
    </location>
</feature>
<feature type="modified residue" description="Phosphoserine" evidence="2">
    <location>
        <position position="192"/>
    </location>
</feature>
<feature type="modified residue" description="Phosphoserine" evidence="2">
    <location>
        <position position="198"/>
    </location>
</feature>
<feature type="modified residue" description="Phosphoserine" evidence="2">
    <location>
        <position position="202"/>
    </location>
</feature>
<proteinExistence type="evidence at transcript level"/>